<name>YOPJ_YERPU</name>
<protein>
    <recommendedName>
        <fullName evidence="15">Serine/threonine-protein acetyltransferase YopJ</fullName>
        <ecNumber evidence="8">2.3.1.-</ecNumber>
    </recommendedName>
    <alternativeName>
        <fullName evidence="15">Virulence factor YopJ</fullName>
    </alternativeName>
</protein>
<dbReference type="EC" id="2.3.1.-" evidence="8"/>
<dbReference type="EMBL" id="KT307967">
    <property type="protein sequence ID" value="ALG88417.1"/>
    <property type="molecule type" value="Genomic_DNA"/>
</dbReference>
<dbReference type="EMBL" id="CP033712">
    <property type="protein sequence ID" value="AYW89929.1"/>
    <property type="molecule type" value="Genomic_DNA"/>
</dbReference>
<dbReference type="EMBL" id="CP033714">
    <property type="protein sequence ID" value="AYX09385.1"/>
    <property type="molecule type" value="Genomic_DNA"/>
</dbReference>
<dbReference type="RefSeq" id="WP_002225474.1">
    <property type="nucleotide sequence ID" value="NZ_WMBG01000075.1"/>
</dbReference>
<dbReference type="SMR" id="A0A0N9NCU6"/>
<dbReference type="OMA" id="IHFAMAE"/>
<dbReference type="GO" id="GO:0005576">
    <property type="term" value="C:extracellular region"/>
    <property type="evidence" value="ECO:0007669"/>
    <property type="project" value="UniProtKB-SubCell"/>
</dbReference>
<dbReference type="GO" id="GO:0016413">
    <property type="term" value="F:O-acetyltransferase activity"/>
    <property type="evidence" value="ECO:0000314"/>
    <property type="project" value="UniProtKB"/>
</dbReference>
<dbReference type="GO" id="GO:0090729">
    <property type="term" value="F:toxin activity"/>
    <property type="evidence" value="ECO:0000314"/>
    <property type="project" value="UniProtKB"/>
</dbReference>
<dbReference type="GO" id="GO:0046329">
    <property type="term" value="P:negative regulation of JNK cascade"/>
    <property type="evidence" value="ECO:0000270"/>
    <property type="project" value="CACAO"/>
</dbReference>
<dbReference type="GO" id="GO:0043409">
    <property type="term" value="P:negative regulation of MAPK cascade"/>
    <property type="evidence" value="ECO:0000314"/>
    <property type="project" value="UniProtKB"/>
</dbReference>
<dbReference type="GO" id="GO:1903753">
    <property type="term" value="P:negative regulation of p38MAPK cascade"/>
    <property type="evidence" value="ECO:0000270"/>
    <property type="project" value="CACAO"/>
</dbReference>
<dbReference type="GO" id="GO:0030919">
    <property type="term" value="P:peptidyl-serine O-acetylation"/>
    <property type="evidence" value="ECO:0000314"/>
    <property type="project" value="UniProtKB"/>
</dbReference>
<dbReference type="GO" id="GO:0120258">
    <property type="term" value="P:peptidyl-threonine O-acetylation"/>
    <property type="evidence" value="ECO:0000314"/>
    <property type="project" value="UniProtKB"/>
</dbReference>
<dbReference type="InterPro" id="IPR005083">
    <property type="entry name" value="YopJ-like"/>
</dbReference>
<dbReference type="NCBIfam" id="NF011898">
    <property type="entry name" value="PRK15371.1"/>
    <property type="match status" value="1"/>
</dbReference>
<dbReference type="NCBIfam" id="NF040632">
    <property type="entry name" value="YopJ_YopP_only"/>
    <property type="match status" value="1"/>
</dbReference>
<dbReference type="Pfam" id="PF03421">
    <property type="entry name" value="Acetyltransf_14"/>
    <property type="match status" value="1"/>
</dbReference>
<reference key="1">
    <citation type="submission" date="2015-07" db="EMBL/GenBank/DDBJ databases">
        <title>Yersinia pseudotuberculosis virulence plasmid from strain IP2666.</title>
        <authorList>
            <person name="Isberg R.R."/>
            <person name="Davis K.M."/>
            <person name="Kumamoto J.J."/>
        </authorList>
    </citation>
    <scope>NUCLEOTIDE SEQUENCE [GENOMIC DNA]</scope>
    <source>
        <strain>IP2666</strain>
        <plasmid>pYV2666</plasmid>
    </source>
</reference>
<reference key="2">
    <citation type="submission" date="2018-11" db="EMBL/GenBank/DDBJ databases">
        <title>FDA dAtabase for Regulatory Grade micrObial Sequences (FDA-ARGOS): Supporting development and validation of Infectious Disease Dx tests.</title>
        <authorList>
            <person name="Bliska J."/>
            <person name="Tallon L."/>
            <person name="Sadzewicz L."/>
            <person name="Zhao X."/>
            <person name="Vavikolanu K."/>
            <person name="Mehta A."/>
            <person name="Aluvathingal J."/>
            <person name="Nadendla S."/>
            <person name="Yan Y."/>
            <person name="Sichtig H."/>
        </authorList>
    </citation>
    <scope>NUCLEOTIDE SEQUENCE [LARGE SCALE GENOMIC DNA]</scope>
    <source>
        <strain>FDAARGOS_580</strain>
        <strain>FDAARGOS_581</strain>
    </source>
</reference>
<reference key="3">
    <citation type="journal article" date="1999" name="Science">
        <title>Inhibition of the mitogen-activated protein kinase kinase superfamily by a Yersinia effector.</title>
        <authorList>
            <person name="Orth K."/>
            <person name="Palmer L.E."/>
            <person name="Bao Z.Q."/>
            <person name="Stewart S."/>
            <person name="Rudolph A.E."/>
            <person name="Bliska J.B."/>
            <person name="Dixon J.E."/>
        </authorList>
    </citation>
    <scope>FUNCTION</scope>
</reference>
<reference key="4">
    <citation type="journal article" date="2000" name="Science">
        <title>Disruption of signaling by Yersinia effector YopJ, a ubiquitin-like protein protease.</title>
        <authorList>
            <person name="Orth K."/>
            <person name="Xu Z."/>
            <person name="Mudgett M.B."/>
            <person name="Bao Z.Q."/>
            <person name="Palmer L.E."/>
            <person name="Bliska J.B."/>
            <person name="Mangel W.F."/>
            <person name="Staskawicz B."/>
            <person name="Dixon J.E."/>
        </authorList>
    </citation>
    <scope>MUTAGENESIS OF HIS-109 AND CYS-172</scope>
    <scope>ACTIVE SITES</scope>
</reference>
<reference key="5">
    <citation type="journal article" date="2002" name="Curr. Opin. Microbiol.">
        <title>Function of the Yersinia effector YopJ.</title>
        <authorList>
            <person name="Orth K."/>
        </authorList>
    </citation>
    <scope>REVIEW</scope>
</reference>
<reference key="6">
    <citation type="journal article" date="2003" name="J. Biol. Chem.">
        <title>Yersinia effector YopJ inhibits yeast MAPK signaling pathways by an evolutionarily conserved mechanism.</title>
        <authorList>
            <person name="Yoon S."/>
            <person name="Liu Z."/>
            <person name="Eyobo Y."/>
            <person name="Orth K."/>
        </authorList>
    </citation>
    <scope>FUNCTION</scope>
</reference>
<reference key="7">
    <citation type="journal article" date="2005" name="J. Exp. Med.">
        <title>Yersinia virulence factor YopJ acts as a deubiquitinase to inhibit NF-kappa B activation.</title>
        <authorList>
            <person name="Zhou H."/>
            <person name="Monack D.M."/>
            <person name="Kayagaki N."/>
            <person name="Wertz I."/>
            <person name="Yin J."/>
            <person name="Wolf B."/>
            <person name="Dixit V.M."/>
        </authorList>
    </citation>
    <scope>CAUTION</scope>
</reference>
<reference key="8">
    <citation type="journal article" date="2006" name="Science">
        <title>Yersinia YopJ acetylates and inhibits kinase activation by blocking phosphorylation.</title>
        <authorList>
            <person name="Mukherjee S."/>
            <person name="Keitany G."/>
            <person name="Li Y."/>
            <person name="Wang Y."/>
            <person name="Ball H.L."/>
            <person name="Goldsmith E.J."/>
            <person name="Orth K."/>
        </authorList>
    </citation>
    <scope>FUNCTION</scope>
    <scope>CATALYTIC ACTIVITY</scope>
    <scope>ACTIVE SITE</scope>
</reference>
<reference key="9">
    <citation type="unpublished observations" date="2006-07">
        <authorList>
            <person name="Orth K."/>
        </authorList>
    </citation>
    <scope>FUNCTION</scope>
</reference>
<reference key="10">
    <citation type="journal article" date="2012" name="PLoS ONE">
        <title>YopJ-induced caspase-1 activation in Yersinia-infected macrophages: independent of apoptosis, linked to necrosis, dispensable for innate host defense.</title>
        <authorList>
            <person name="Zheng Y."/>
            <person name="Lilo S."/>
            <person name="Mena P."/>
            <person name="Bliska J.B."/>
        </authorList>
    </citation>
    <scope>FUNCTION</scope>
    <source>
        <strain>IP2666</strain>
        <plasmid>pYV2666</plasmid>
    </source>
</reference>
<reference key="11">
    <citation type="journal article" date="2016" name="Infect. Immun.">
        <title>Uncovering an Important Role for YopJ in the Inhibition of Caspase-1 in Activated Macrophages and Promoting Yersinia pseudotuberculosis Virulence.</title>
        <authorList>
            <person name="Schoberle T.J."/>
            <person name="Chung L.K."/>
            <person name="McPhee J.B."/>
            <person name="Bogin B."/>
            <person name="Bliska J.B."/>
        </authorList>
    </citation>
    <scope>FUNCTION</scope>
    <source>
        <strain>32777 / IP2777 / Serotype O1:b</strain>
    </source>
</reference>
<reference key="12">
    <citation type="journal article" date="2018" name="Proc. Natl. Acad. Sci. U.S.A.">
        <title>Caspase-8 induces cleavage of gasdermin D to elicit pyroptosis during Yersinia infection.</title>
        <authorList>
            <person name="Sarhan J."/>
            <person name="Liu B.C."/>
            <person name="Muendlein H.I."/>
            <person name="Li P."/>
            <person name="Nilson R."/>
            <person name="Tang A.Y."/>
            <person name="Rongvaux A."/>
            <person name="Bunnell S.C."/>
            <person name="Shao F."/>
            <person name="Green D.R."/>
            <person name="Poltorak A."/>
        </authorList>
    </citation>
    <scope>FUNCTION</scope>
    <source>
        <strain>IP2666</strain>
        <plasmid>pYV2666</plasmid>
    </source>
</reference>
<reference key="13">
    <citation type="journal article" date="2018" name="Science">
        <title>Pathogen blockade of TAK1 triggers caspase-8-dependent cleavage of gasdermin D and cell death.</title>
        <authorList>
            <person name="Orning P."/>
            <person name="Weng D."/>
            <person name="Starheim K."/>
            <person name="Ratner D."/>
            <person name="Best Z."/>
            <person name="Lee B."/>
            <person name="Brooks A."/>
            <person name="Xia S."/>
            <person name="Wu H."/>
            <person name="Kelliher M.A."/>
            <person name="Berger S.B."/>
            <person name="Gough P.J."/>
            <person name="Bertin J."/>
            <person name="Proulx M.M."/>
            <person name="Goguen J.D."/>
            <person name="Kayagaki N."/>
            <person name="Fitzgerald K.A."/>
            <person name="Lien E."/>
        </authorList>
    </citation>
    <scope>FUNCTION</scope>
    <source>
        <strain>32777 / IP2777 / Serotype O1:b</strain>
    </source>
</reference>
<comment type="function">
    <text evidence="2 4 6 8 9 10 11 12 13">Serine/threonine-protein acetyltransferase translocated into infected cells, which inhibits the host immune response and induces cell death by mediating acetylation of target proteins (PubMed:10489373, PubMed:12433923, PubMed:16728640, PubMed:22563435, PubMed:26810037). Inhibits the MAPK and NF-kappa-B signaling pathways by acetylating protein-kinases such as MAP2K1, MAP2K6, MAP3K7/TAK1 and I-kappa-B kinase (CHUK/IKKA and IKBKB) on serine and threonine residues critical for their activation by phosphorylation, thereby preventing protein-kinase activation (PubMed:16728640, PubMed:30361383, Ref.9). Promotes pyroptosis, a programmed cell death, in host cells by mediating acetylation of MAP3K7/TAK1: MAP3K7/TAK1 inactivation triggers activation of caspase-8 (CASP8), followed by CASP8-dependent cleavage of gasdermin-D (GSDMD) and induction of pyroptosis (PubMed:30361383, PubMed:30381458). Also able to induce intestinal barrier dysfunction by acetylating and inhibiting host protein-kinases RIPK2/RICK and MAP3K7/TAK1, thereby promoting cell death (By similarity).</text>
</comment>
<comment type="catalytic activity">
    <reaction evidence="8">
        <text>L-threonyl-[protein] + acetyl-CoA = O-acetyl-L-threonyl-[protein] + CoA</text>
        <dbReference type="Rhea" id="RHEA:65340"/>
        <dbReference type="Rhea" id="RHEA-COMP:11060"/>
        <dbReference type="Rhea" id="RHEA-COMP:16780"/>
        <dbReference type="ChEBI" id="CHEBI:30013"/>
        <dbReference type="ChEBI" id="CHEBI:57287"/>
        <dbReference type="ChEBI" id="CHEBI:57288"/>
        <dbReference type="ChEBI" id="CHEBI:141025"/>
    </reaction>
    <physiologicalReaction direction="left-to-right" evidence="8">
        <dbReference type="Rhea" id="RHEA:65341"/>
    </physiologicalReaction>
</comment>
<comment type="catalytic activity">
    <reaction evidence="8">
        <text>L-seryl-[protein] + acetyl-CoA = O-acetyl-L-seryl-[protein] + CoA</text>
        <dbReference type="Rhea" id="RHEA:59392"/>
        <dbReference type="Rhea" id="RHEA-COMP:9863"/>
        <dbReference type="Rhea" id="RHEA-COMP:15352"/>
        <dbReference type="ChEBI" id="CHEBI:29999"/>
        <dbReference type="ChEBI" id="CHEBI:57287"/>
        <dbReference type="ChEBI" id="CHEBI:57288"/>
        <dbReference type="ChEBI" id="CHEBI:141128"/>
    </reaction>
    <physiologicalReaction direction="left-to-right" evidence="8">
        <dbReference type="Rhea" id="RHEA:59393"/>
    </physiologicalReaction>
</comment>
<comment type="cofactor">
    <cofactor evidence="1">
        <name>1D-myo-inositol hexakisphosphate</name>
        <dbReference type="ChEBI" id="CHEBI:58130"/>
    </cofactor>
</comment>
<comment type="activity regulation">
    <text evidence="3">1D-myo-inositol hexakisphosphate activates protein-acetyltransferase activity via an allosteric mechanism: 1D-myo-inositol hexakisphosphate-binding induces a conformational rearrangement that stimulates the interaction with acetyl-CoA.</text>
</comment>
<comment type="subcellular location">
    <subcellularLocation>
        <location evidence="2">Secreted</location>
    </subcellularLocation>
    <text evidence="2">Secreted via type III secretion system (T3SS).</text>
</comment>
<comment type="similarity">
    <text evidence="15">Belongs to the acetyltransferase YopJ family.</text>
</comment>
<comment type="caution">
    <text evidence="5 7 8">Was initially thought to be a protease involved in deubiquitination because of its similarity with cysteine proteases (PubMed:11090361, PubMed:16301742). However, it was later shown that YopJ is an acetyltransferase that uses a dual substrate mechanism similar to the one used by papain-like proteases (PubMed:16728640).</text>
</comment>
<evidence type="ECO:0000250" key="1">
    <source>
        <dbReference type="UniProtKB" id="O68718"/>
    </source>
</evidence>
<evidence type="ECO:0000250" key="2">
    <source>
        <dbReference type="UniProtKB" id="P0DUD0"/>
    </source>
</evidence>
<evidence type="ECO:0000250" key="3">
    <source>
        <dbReference type="UniProtKB" id="Q6VE93"/>
    </source>
</evidence>
<evidence type="ECO:0000269" key="4">
    <source>
    </source>
</evidence>
<evidence type="ECO:0000269" key="5">
    <source>
    </source>
</evidence>
<evidence type="ECO:0000269" key="6">
    <source>
    </source>
</evidence>
<evidence type="ECO:0000269" key="7">
    <source>
    </source>
</evidence>
<evidence type="ECO:0000269" key="8">
    <source>
    </source>
</evidence>
<evidence type="ECO:0000269" key="9">
    <source>
    </source>
</evidence>
<evidence type="ECO:0000269" key="10">
    <source>
    </source>
</evidence>
<evidence type="ECO:0000269" key="11">
    <source>
    </source>
</evidence>
<evidence type="ECO:0000269" key="12">
    <source>
    </source>
</evidence>
<evidence type="ECO:0000269" key="13">
    <source ref="9"/>
</evidence>
<evidence type="ECO:0000303" key="14">
    <source>
    </source>
</evidence>
<evidence type="ECO:0000305" key="15"/>
<evidence type="ECO:0000305" key="16">
    <source>
    </source>
</evidence>
<evidence type="ECO:0000305" key="17">
    <source>
    </source>
</evidence>
<evidence type="ECO:0000312" key="18">
    <source>
        <dbReference type="EMBL" id="ALG88417.1"/>
    </source>
</evidence>
<evidence type="ECO:0000312" key="19">
    <source>
        <dbReference type="EMBL" id="AYW89929.1"/>
    </source>
</evidence>
<evidence type="ECO:0000312" key="20">
    <source>
        <dbReference type="EMBL" id="AYX09385.1"/>
    </source>
</evidence>
<proteinExistence type="evidence at protein level"/>
<gene>
    <name evidence="14" type="primary">yopJ</name>
    <name evidence="19" type="ORF">EGX47_00330</name>
    <name evidence="20" type="ORF">EGX52_00040</name>
</gene>
<geneLocation type="plasmid" evidence="18">
    <name>pYV2666</name>
</geneLocation>
<sequence>MIGPISQINISGGLSEKETSSLISNEELKNIITQLETDISDGSWFHKNYSRMDVEVMPALVIQANNKYPEMNLNLVTSPLDLSIEIKNVIENGVRSSRFIINMGEGGIHFSVIDYKHINGKTSLILFEPANFNSMGPAMLAIRTKTAIERYQLPDCHFSMVEMDIQRSSSECGIFSFALAKKLYIERDSLLKIHEDNIKGILSDGENPLPHDKLDPYLPVTFYKHTQGKKRLNEYLNTNPQGVGTVVNKKNETIVNRFDNNKSIVDGKELSVSVHKKRIAEYKTLLKV</sequence>
<feature type="chain" id="PRO_0000451624" description="Serine/threonine-protein acetyltransferase YopJ">
    <location>
        <begin position="1"/>
        <end position="288"/>
    </location>
</feature>
<feature type="active site" evidence="16">
    <location>
        <position position="109"/>
    </location>
</feature>
<feature type="active site" evidence="3">
    <location>
        <position position="128"/>
    </location>
</feature>
<feature type="active site" evidence="16 17">
    <location>
        <position position="172"/>
    </location>
</feature>
<feature type="binding site" evidence="3">
    <location>
        <position position="109"/>
    </location>
    <ligand>
        <name>CoA</name>
        <dbReference type="ChEBI" id="CHEBI:57287"/>
    </ligand>
</feature>
<feature type="binding site" evidence="3">
    <location>
        <begin position="167"/>
        <end position="168"/>
    </location>
    <ligand>
        <name>CoA</name>
        <dbReference type="ChEBI" id="CHEBI:57287"/>
    </ligand>
</feature>
<feature type="binding site" evidence="3">
    <location>
        <begin position="182"/>
        <end position="185"/>
    </location>
    <ligand>
        <name>1D-myo-inositol hexakisphosphate</name>
        <dbReference type="ChEBI" id="CHEBI:58130"/>
    </ligand>
</feature>
<feature type="binding site" evidence="3">
    <location>
        <begin position="224"/>
        <end position="225"/>
    </location>
    <ligand>
        <name>1D-myo-inositol hexakisphosphate</name>
        <dbReference type="ChEBI" id="CHEBI:58130"/>
    </ligand>
</feature>
<feature type="binding site" evidence="3">
    <location>
        <begin position="227"/>
        <end position="230"/>
    </location>
    <ligand>
        <name>CoA</name>
        <dbReference type="ChEBI" id="CHEBI:57287"/>
    </ligand>
</feature>
<feature type="binding site" evidence="3">
    <location>
        <position position="257"/>
    </location>
    <ligand>
        <name>1D-myo-inositol hexakisphosphate</name>
        <dbReference type="ChEBI" id="CHEBI:58130"/>
    </ligand>
</feature>
<feature type="binding site" evidence="3">
    <location>
        <begin position="266"/>
        <end position="270"/>
    </location>
    <ligand>
        <name>CoA</name>
        <dbReference type="ChEBI" id="CHEBI:57287"/>
    </ligand>
</feature>
<feature type="mutagenesis site" description="Abolished ability to inhibit the MAP kinase kinase (MAPKK) pathway and promote virulence." evidence="5">
    <original>H</original>
    <variation>A</variation>
    <location>
        <position position="109"/>
    </location>
</feature>
<feature type="mutagenesis site" description="Abolished ability to inhibit the MAP kinase kinase (MAPKK) pathway and promote virulence." evidence="5">
    <original>C</original>
    <variation>A</variation>
    <location>
        <position position="172"/>
    </location>
</feature>
<organism>
    <name type="scientific">Yersinia pseudotuberculosis</name>
    <dbReference type="NCBI Taxonomy" id="633"/>
    <lineage>
        <taxon>Bacteria</taxon>
        <taxon>Pseudomonadati</taxon>
        <taxon>Pseudomonadota</taxon>
        <taxon>Gammaproteobacteria</taxon>
        <taxon>Enterobacterales</taxon>
        <taxon>Yersiniaceae</taxon>
        <taxon>Yersinia</taxon>
    </lineage>
</organism>
<accession>A0A0N9NCU6</accession>
<keyword id="KW-0012">Acyltransferase</keyword>
<keyword id="KW-0021">Allosteric enzyme</keyword>
<keyword id="KW-0614">Plasmid</keyword>
<keyword id="KW-0964">Secreted</keyword>
<keyword id="KW-0808">Transferase</keyword>
<keyword id="KW-0843">Virulence</keyword>